<reference key="1">
    <citation type="submission" date="2006-03" db="EMBL/GenBank/DDBJ databases">
        <title>Complete genome sequence of Francisella tularensis LVS (Live Vaccine Strain).</title>
        <authorList>
            <person name="Chain P."/>
            <person name="Larimer F."/>
            <person name="Land M."/>
            <person name="Stilwagen S."/>
            <person name="Larsson P."/>
            <person name="Bearden S."/>
            <person name="Chu M."/>
            <person name="Oyston P."/>
            <person name="Forsman M."/>
            <person name="Andersson S."/>
            <person name="Lindler L."/>
            <person name="Titball R."/>
            <person name="Garcia E."/>
        </authorList>
    </citation>
    <scope>NUCLEOTIDE SEQUENCE [LARGE SCALE GENOMIC DNA]</scope>
    <source>
        <strain>LVS</strain>
    </source>
</reference>
<comment type="function">
    <text evidence="1">Thiolesterase that catalyzes the hydrolysis of S-D-lactoyl-glutathione to form glutathione and D-lactic acid.</text>
</comment>
<comment type="catalytic activity">
    <reaction evidence="1">
        <text>an S-(2-hydroxyacyl)glutathione + H2O = a 2-hydroxy carboxylate + glutathione + H(+)</text>
        <dbReference type="Rhea" id="RHEA:21864"/>
        <dbReference type="ChEBI" id="CHEBI:15377"/>
        <dbReference type="ChEBI" id="CHEBI:15378"/>
        <dbReference type="ChEBI" id="CHEBI:57925"/>
        <dbReference type="ChEBI" id="CHEBI:58896"/>
        <dbReference type="ChEBI" id="CHEBI:71261"/>
        <dbReference type="EC" id="3.1.2.6"/>
    </reaction>
</comment>
<comment type="cofactor">
    <cofactor evidence="1">
        <name>Zn(2+)</name>
        <dbReference type="ChEBI" id="CHEBI:29105"/>
    </cofactor>
    <text evidence="1">Binds 2 Zn(2+) ions per subunit.</text>
</comment>
<comment type="pathway">
    <text evidence="1">Secondary metabolite metabolism; methylglyoxal degradation; (R)-lactate from methylglyoxal: step 2/2.</text>
</comment>
<comment type="subunit">
    <text evidence="1">Monomer.</text>
</comment>
<comment type="similarity">
    <text evidence="1">Belongs to the metallo-beta-lactamase superfamily. Glyoxalase II family.</text>
</comment>
<accession>Q2A4E2</accession>
<evidence type="ECO:0000255" key="1">
    <source>
        <dbReference type="HAMAP-Rule" id="MF_01374"/>
    </source>
</evidence>
<sequence length="252" mass="28833">MQIKRWFLNNSLRNYQYLLYDKSHAIVIDPLKSDIFAEFIAKNKLQLEAILITHKHGDHIAGVKKLLAIYPNAKVYAYTGNDLFKPDIYVKDGSFINLGFTSFRVMYIPGHIDDHVCFLFEQERALFCGDTLFNAGVGGVQAESADINQLYDSLVKITKLDGDIKPYPAHDYWLGNLDFALSILADDSYFNYYRNQVAELAAEDKPIVNLAEEAKLNIFIRAMSDKALLKALPDYSLGREMFVKLRQLKNNF</sequence>
<feature type="chain" id="PRO_0000309641" description="Hydroxyacylglutathione hydrolase">
    <location>
        <begin position="1"/>
        <end position="252"/>
    </location>
</feature>
<feature type="binding site" evidence="1">
    <location>
        <position position="54"/>
    </location>
    <ligand>
        <name>Zn(2+)</name>
        <dbReference type="ChEBI" id="CHEBI:29105"/>
        <label>1</label>
    </ligand>
</feature>
<feature type="binding site" evidence="1">
    <location>
        <position position="56"/>
    </location>
    <ligand>
        <name>Zn(2+)</name>
        <dbReference type="ChEBI" id="CHEBI:29105"/>
        <label>1</label>
    </ligand>
</feature>
<feature type="binding site" evidence="1">
    <location>
        <position position="58"/>
    </location>
    <ligand>
        <name>Zn(2+)</name>
        <dbReference type="ChEBI" id="CHEBI:29105"/>
        <label>2</label>
    </ligand>
</feature>
<feature type="binding site" evidence="1">
    <location>
        <position position="59"/>
    </location>
    <ligand>
        <name>Zn(2+)</name>
        <dbReference type="ChEBI" id="CHEBI:29105"/>
        <label>2</label>
    </ligand>
</feature>
<feature type="binding site" evidence="1">
    <location>
        <position position="111"/>
    </location>
    <ligand>
        <name>Zn(2+)</name>
        <dbReference type="ChEBI" id="CHEBI:29105"/>
        <label>1</label>
    </ligand>
</feature>
<feature type="binding site" evidence="1">
    <location>
        <position position="130"/>
    </location>
    <ligand>
        <name>Zn(2+)</name>
        <dbReference type="ChEBI" id="CHEBI:29105"/>
        <label>1</label>
    </ligand>
</feature>
<feature type="binding site" evidence="1">
    <location>
        <position position="130"/>
    </location>
    <ligand>
        <name>Zn(2+)</name>
        <dbReference type="ChEBI" id="CHEBI:29105"/>
        <label>2</label>
    </ligand>
</feature>
<feature type="binding site" evidence="1">
    <location>
        <position position="170"/>
    </location>
    <ligand>
        <name>Zn(2+)</name>
        <dbReference type="ChEBI" id="CHEBI:29105"/>
        <label>2</label>
    </ligand>
</feature>
<dbReference type="EC" id="3.1.2.6" evidence="1"/>
<dbReference type="EMBL" id="AM233362">
    <property type="protein sequence ID" value="CAJ79097.1"/>
    <property type="molecule type" value="Genomic_DNA"/>
</dbReference>
<dbReference type="RefSeq" id="WP_003015071.1">
    <property type="nucleotide sequence ID" value="NZ_CP009694.1"/>
</dbReference>
<dbReference type="SMR" id="Q2A4E2"/>
<dbReference type="KEGG" id="ftl:FTL_0657"/>
<dbReference type="UniPathway" id="UPA00619">
    <property type="reaction ID" value="UER00676"/>
</dbReference>
<dbReference type="Proteomes" id="UP000001944">
    <property type="component" value="Chromosome"/>
</dbReference>
<dbReference type="GO" id="GO:0004416">
    <property type="term" value="F:hydroxyacylglutathione hydrolase activity"/>
    <property type="evidence" value="ECO:0007669"/>
    <property type="project" value="UniProtKB-UniRule"/>
</dbReference>
<dbReference type="GO" id="GO:0046872">
    <property type="term" value="F:metal ion binding"/>
    <property type="evidence" value="ECO:0007669"/>
    <property type="project" value="UniProtKB-KW"/>
</dbReference>
<dbReference type="GO" id="GO:0019243">
    <property type="term" value="P:methylglyoxal catabolic process to D-lactate via S-lactoyl-glutathione"/>
    <property type="evidence" value="ECO:0007669"/>
    <property type="project" value="InterPro"/>
</dbReference>
<dbReference type="CDD" id="cd07723">
    <property type="entry name" value="hydroxyacylglutathione_hydrolase_MBL-fold"/>
    <property type="match status" value="1"/>
</dbReference>
<dbReference type="Gene3D" id="3.60.15.10">
    <property type="entry name" value="Ribonuclease Z/Hydroxyacylglutathione hydrolase-like"/>
    <property type="match status" value="1"/>
</dbReference>
<dbReference type="HAMAP" id="MF_01374">
    <property type="entry name" value="Glyoxalase_2"/>
    <property type="match status" value="1"/>
</dbReference>
<dbReference type="InterPro" id="IPR035680">
    <property type="entry name" value="Clx_II_MBL"/>
</dbReference>
<dbReference type="InterPro" id="IPR050110">
    <property type="entry name" value="Glyoxalase_II_hydrolase"/>
</dbReference>
<dbReference type="InterPro" id="IPR032282">
    <property type="entry name" value="HAGH_C"/>
</dbReference>
<dbReference type="InterPro" id="IPR017782">
    <property type="entry name" value="Hydroxyacylglutathione_Hdrlase"/>
</dbReference>
<dbReference type="InterPro" id="IPR001279">
    <property type="entry name" value="Metallo-B-lactamas"/>
</dbReference>
<dbReference type="InterPro" id="IPR036866">
    <property type="entry name" value="RibonucZ/Hydroxyglut_hydro"/>
</dbReference>
<dbReference type="PANTHER" id="PTHR43705">
    <property type="entry name" value="HYDROXYACYLGLUTATHIONE HYDROLASE"/>
    <property type="match status" value="1"/>
</dbReference>
<dbReference type="PANTHER" id="PTHR43705:SF1">
    <property type="entry name" value="HYDROXYACYLGLUTATHIONE HYDROLASE GLOB"/>
    <property type="match status" value="1"/>
</dbReference>
<dbReference type="Pfam" id="PF16123">
    <property type="entry name" value="HAGH_C"/>
    <property type="match status" value="1"/>
</dbReference>
<dbReference type="Pfam" id="PF00753">
    <property type="entry name" value="Lactamase_B"/>
    <property type="match status" value="1"/>
</dbReference>
<dbReference type="SMART" id="SM00849">
    <property type="entry name" value="Lactamase_B"/>
    <property type="match status" value="1"/>
</dbReference>
<dbReference type="SUPFAM" id="SSF56281">
    <property type="entry name" value="Metallo-hydrolase/oxidoreductase"/>
    <property type="match status" value="1"/>
</dbReference>
<name>GLO2_FRATH</name>
<organism>
    <name type="scientific">Francisella tularensis subsp. holarctica (strain LVS)</name>
    <dbReference type="NCBI Taxonomy" id="376619"/>
    <lineage>
        <taxon>Bacteria</taxon>
        <taxon>Pseudomonadati</taxon>
        <taxon>Pseudomonadota</taxon>
        <taxon>Gammaproteobacteria</taxon>
        <taxon>Thiotrichales</taxon>
        <taxon>Francisellaceae</taxon>
        <taxon>Francisella</taxon>
    </lineage>
</organism>
<gene>
    <name evidence="1" type="primary">gloB</name>
    <name type="ordered locus">FTL_0657</name>
</gene>
<keyword id="KW-0378">Hydrolase</keyword>
<keyword id="KW-0479">Metal-binding</keyword>
<keyword id="KW-1185">Reference proteome</keyword>
<keyword id="KW-0862">Zinc</keyword>
<proteinExistence type="inferred from homology"/>
<protein>
    <recommendedName>
        <fullName evidence="1">Hydroxyacylglutathione hydrolase</fullName>
        <ecNumber evidence="1">3.1.2.6</ecNumber>
    </recommendedName>
    <alternativeName>
        <fullName evidence="1">Glyoxalase II</fullName>
        <shortName evidence="1">Glx II</shortName>
    </alternativeName>
</protein>